<protein>
    <recommendedName>
        <fullName>Cytochrome c oxidase subunit 1</fullName>
        <ecNumber>7.1.1.9</ecNumber>
    </recommendedName>
    <alternativeName>
        <fullName>Cytochrome c oxidase polypeptide I</fullName>
    </alternativeName>
</protein>
<accession>Q9B229</accession>
<accession>Q85KD6</accession>
<geneLocation type="mitochondrion" evidence="7"/>
<dbReference type="EC" id="7.1.1.9"/>
<dbReference type="EMBL" id="AY242402">
    <property type="protein sequence ID" value="AAP13120.1"/>
    <property type="molecule type" value="Genomic_DNA"/>
</dbReference>
<dbReference type="EMBL" id="AY027627">
    <property type="protein sequence ID" value="AAK16643.1"/>
    <property type="molecule type" value="Genomic_DNA"/>
</dbReference>
<dbReference type="SMR" id="Q9B229"/>
<dbReference type="UniPathway" id="UPA00705"/>
<dbReference type="GO" id="GO:0005743">
    <property type="term" value="C:mitochondrial inner membrane"/>
    <property type="evidence" value="ECO:0007669"/>
    <property type="project" value="UniProtKB-SubCell"/>
</dbReference>
<dbReference type="GO" id="GO:0004129">
    <property type="term" value="F:cytochrome-c oxidase activity"/>
    <property type="evidence" value="ECO:0007669"/>
    <property type="project" value="UniProtKB-EC"/>
</dbReference>
<dbReference type="GO" id="GO:0020037">
    <property type="term" value="F:heme binding"/>
    <property type="evidence" value="ECO:0007669"/>
    <property type="project" value="InterPro"/>
</dbReference>
<dbReference type="GO" id="GO:0046872">
    <property type="term" value="F:metal ion binding"/>
    <property type="evidence" value="ECO:0007669"/>
    <property type="project" value="UniProtKB-KW"/>
</dbReference>
<dbReference type="GO" id="GO:0015990">
    <property type="term" value="P:electron transport coupled proton transport"/>
    <property type="evidence" value="ECO:0007669"/>
    <property type="project" value="TreeGrafter"/>
</dbReference>
<dbReference type="GO" id="GO:0006123">
    <property type="term" value="P:mitochondrial electron transport, cytochrome c to oxygen"/>
    <property type="evidence" value="ECO:0007669"/>
    <property type="project" value="TreeGrafter"/>
</dbReference>
<dbReference type="Gene3D" id="1.20.210.10">
    <property type="entry name" value="Cytochrome c oxidase-like, subunit I domain"/>
    <property type="match status" value="1"/>
</dbReference>
<dbReference type="InterPro" id="IPR023616">
    <property type="entry name" value="Cyt_c_oxase-like_su1_dom"/>
</dbReference>
<dbReference type="InterPro" id="IPR036927">
    <property type="entry name" value="Cyt_c_oxase-like_su1_sf"/>
</dbReference>
<dbReference type="InterPro" id="IPR000883">
    <property type="entry name" value="Cyt_C_Oxase_1"/>
</dbReference>
<dbReference type="InterPro" id="IPR023615">
    <property type="entry name" value="Cyt_c_Oxase_su1_BS"/>
</dbReference>
<dbReference type="PANTHER" id="PTHR10422">
    <property type="entry name" value="CYTOCHROME C OXIDASE SUBUNIT 1"/>
    <property type="match status" value="1"/>
</dbReference>
<dbReference type="PANTHER" id="PTHR10422:SF18">
    <property type="entry name" value="CYTOCHROME C OXIDASE SUBUNIT 1"/>
    <property type="match status" value="1"/>
</dbReference>
<dbReference type="Pfam" id="PF00115">
    <property type="entry name" value="COX1"/>
    <property type="match status" value="1"/>
</dbReference>
<dbReference type="PRINTS" id="PR01165">
    <property type="entry name" value="CYCOXIDASEI"/>
</dbReference>
<dbReference type="SUPFAM" id="SSF81442">
    <property type="entry name" value="Cytochrome c oxidase subunit I-like"/>
    <property type="match status" value="1"/>
</dbReference>
<dbReference type="PROSITE" id="PS50855">
    <property type="entry name" value="COX1"/>
    <property type="match status" value="1"/>
</dbReference>
<dbReference type="PROSITE" id="PS00077">
    <property type="entry name" value="COX1_CUB"/>
    <property type="match status" value="1"/>
</dbReference>
<organism>
    <name type="scientific">Chrysomela knabi</name>
    <name type="common">Leaf beetle</name>
    <dbReference type="NCBI Taxonomy" id="153783"/>
    <lineage>
        <taxon>Eukaryota</taxon>
        <taxon>Metazoa</taxon>
        <taxon>Ecdysozoa</taxon>
        <taxon>Arthropoda</taxon>
        <taxon>Hexapoda</taxon>
        <taxon>Insecta</taxon>
        <taxon>Pterygota</taxon>
        <taxon>Neoptera</taxon>
        <taxon>Endopterygota</taxon>
        <taxon>Coleoptera</taxon>
        <taxon>Polyphaga</taxon>
        <taxon>Cucujiformia</taxon>
        <taxon>Chrysomeloidea</taxon>
        <taxon>Chrysomelidae</taxon>
        <taxon>Chrysomelinae</taxon>
        <taxon>Chrysomelini</taxon>
        <taxon>Chrysomela</taxon>
    </lineage>
</organism>
<sequence>FPRMNNMSFWLLPPSLFLLIMSSIVENGAGTGWTVYPPLSSNIAHGGSSVDLAIFSLHLAGISSILGAINFITTVINMRPMGMKLDRMPLFVWAVVITAILLLLSLPVLAGAITMLLTDRNLNTSFFDPAGGGDPILYQHLFWFFGHPEVYILILPGFGMISHIISQESSKKEVFGTLGMIYAMMAIGLLGFIVWAHHMFTVGMDVDTQTYFTSATMII</sequence>
<gene>
    <name evidence="7" type="primary">COI</name>
</gene>
<proteinExistence type="inferred from homology"/>
<evidence type="ECO:0000250" key="1"/>
<evidence type="ECO:0000250" key="2">
    <source>
        <dbReference type="UniProtKB" id="P00396"/>
    </source>
</evidence>
<evidence type="ECO:0000250" key="3">
    <source>
        <dbReference type="UniProtKB" id="P00401"/>
    </source>
</evidence>
<evidence type="ECO:0000255" key="4">
    <source>
        <dbReference type="RuleBase" id="RU000369"/>
    </source>
</evidence>
<evidence type="ECO:0000269" key="5">
    <source>
    </source>
</evidence>
<evidence type="ECO:0000305" key="6"/>
<evidence type="ECO:0000312" key="7">
    <source>
        <dbReference type="EMBL" id="AAK16643.1"/>
    </source>
</evidence>
<evidence type="ECO:0000312" key="8">
    <source>
        <dbReference type="EMBL" id="AAP13120.1"/>
    </source>
</evidence>
<feature type="chain" id="PRO_0000183314" description="Cytochrome c oxidase subunit 1">
    <location>
        <begin position="1" status="less than"/>
        <end position="219" status="greater than"/>
    </location>
</feature>
<feature type="topological domain" description="Mitochondrial matrix" evidence="1">
    <location>
        <begin position="1" status="less than"/>
        <end position="1"/>
    </location>
</feature>
<feature type="transmembrane region" description="Helical; Name=III" evidence="1">
    <location>
        <begin position="2"/>
        <end position="24"/>
    </location>
</feature>
<feature type="topological domain" description="Mitochondrial intermembrane" evidence="1">
    <location>
        <begin position="25"/>
        <end position="47"/>
    </location>
</feature>
<feature type="transmembrane region" description="Helical; Name=IV" evidence="1">
    <location>
        <begin position="48"/>
        <end position="77"/>
    </location>
</feature>
<feature type="topological domain" description="Mitochondrial matrix" evidence="1">
    <location>
        <begin position="78"/>
        <end position="89"/>
    </location>
</feature>
<feature type="transmembrane region" description="Helical; Name=V" evidence="1">
    <location>
        <begin position="90"/>
        <end position="119"/>
    </location>
</feature>
<feature type="topological domain" description="Mitochondrial intermembrane" evidence="1">
    <location>
        <begin position="120"/>
        <end position="134"/>
    </location>
</feature>
<feature type="transmembrane region" description="Helical; Name=VI" evidence="1">
    <location>
        <begin position="135"/>
        <end position="168"/>
    </location>
</feature>
<feature type="topological domain" description="Mitochondrial matrix" evidence="1">
    <location>
        <begin position="169"/>
        <end position="176"/>
    </location>
</feature>
<feature type="transmembrane region" description="Helical; Name=VII" evidence="1">
    <location>
        <begin position="177"/>
        <end position="193"/>
    </location>
</feature>
<feature type="topological domain" description="Mitochondrial intermembrane" evidence="1">
    <location>
        <begin position="194"/>
        <end position="205"/>
    </location>
</feature>
<feature type="transmembrane region" description="Helical; Name=VIII" evidence="1">
    <location>
        <begin position="206"/>
        <end position="219" status="greater than"/>
    </location>
</feature>
<feature type="binding site" evidence="3">
    <location>
        <position position="147"/>
    </location>
    <ligand>
        <name>Cu cation</name>
        <dbReference type="ChEBI" id="CHEBI:23378"/>
        <label>B</label>
    </ligand>
</feature>
<feature type="binding site" evidence="2">
    <location>
        <position position="151"/>
    </location>
    <ligand>
        <name>O2</name>
        <dbReference type="ChEBI" id="CHEBI:15379"/>
    </ligand>
</feature>
<feature type="binding site" evidence="3">
    <location>
        <position position="197"/>
    </location>
    <ligand>
        <name>Cu cation</name>
        <dbReference type="ChEBI" id="CHEBI:23378"/>
        <label>B</label>
    </ligand>
</feature>
<feature type="binding site" evidence="3">
    <location>
        <position position="198"/>
    </location>
    <ligand>
        <name>Cu cation</name>
        <dbReference type="ChEBI" id="CHEBI:23378"/>
        <label>B</label>
    </ligand>
</feature>
<feature type="cross-link" description="1'-histidyl-3'-tyrosine (His-Tyr)" evidence="2">
    <location>
        <begin position="147"/>
        <end position="151"/>
    </location>
</feature>
<feature type="sequence conflict" description="In Ref. 2; AAK16643." evidence="6" ref="2">
    <original>I</original>
    <variation>L</variation>
    <location>
        <position position="20"/>
    </location>
</feature>
<feature type="sequence conflict" description="In Ref. 2; AAK16643." evidence="6" ref="2">
    <original>SNIAHG</original>
    <variation>ANTAHS</variation>
    <location>
        <begin position="41"/>
        <end position="46"/>
    </location>
</feature>
<feature type="sequence conflict" description="In Ref. 2; AAK16643." evidence="6" ref="2">
    <original>MGMKLDRM</original>
    <variation>EGMNFEQT</variation>
    <location>
        <begin position="81"/>
        <end position="88"/>
    </location>
</feature>
<feature type="sequence conflict" description="In Ref. 2; AAK16643." evidence="6" ref="2">
    <original>V</original>
    <variation>L</variation>
    <location>
        <position position="96"/>
    </location>
</feature>
<feature type="non-terminal residue" evidence="8">
    <location>
        <position position="1"/>
    </location>
</feature>
<feature type="non-terminal residue" evidence="6">
    <location>
        <position position="219"/>
    </location>
</feature>
<name>COX1_CHRKN</name>
<reference evidence="6 8" key="1">
    <citation type="journal article" date="2003" name="Mol. Phylogenet. Evol.">
        <title>Convergent evolution of cucurbitacin feeding in spatially isolated rootworm taxa (Coleoptera: Chrysomelidae; Galerucinae, Luperini).</title>
        <authorList>
            <person name="Gillespie J.J."/>
            <person name="Kjer K.M."/>
            <person name="Duckett C.N."/>
            <person name="Tallamy D.W."/>
        </authorList>
    </citation>
    <scope>NUCLEOTIDE SEQUENCE [GENOMIC DNA] OF 1-154</scope>
    <source>
        <strain evidence="5">Isolate JJG237</strain>
    </source>
</reference>
<reference evidence="6 7" key="2">
    <citation type="journal article" date="2001" name="Proc. Natl. Acad. Sci. U.S.A.">
        <title>Feeding specialization and host-derived chemical defense in Chrysomeline leaf beetles did not lead to an evolutionary dead end.</title>
        <authorList>
            <person name="Termonia A."/>
            <person name="Hsiao T.H."/>
            <person name="Pasteels J.M."/>
            <person name="Milinkovitch M.C."/>
        </authorList>
    </citation>
    <scope>NUCLEOTIDE SEQUENCE [GENOMIC DNA] OF 10-219</scope>
</reference>
<comment type="function">
    <text evidence="3">Component of the cytochrome c oxidase, the last enzyme in the mitochondrial electron transport chain which drives oxidative phosphorylation. The respiratory chain contains 3 multisubunit complexes succinate dehydrogenase (complex II, CII), ubiquinol-cytochrome c oxidoreductase (cytochrome b-c1 complex, complex III, CIII) and cytochrome c oxidase (complex IV, CIV), that cooperate to transfer electrons derived from NADH and succinate to molecular oxygen, creating an electrochemical gradient over the inner membrane that drives transmembrane transport and the ATP synthase. Cytochrome c oxidase is the component of the respiratory chain that catalyzes the reduction of oxygen to water. Electrons originating from reduced cytochrome c in the intermembrane space (IMS) are transferred via the dinuclear copper A center (CU(A)) of subunit 2 and heme A of subunit 1 to the active site in subunit 1, a binuclear center (BNC) formed by heme A3 and copper B (CU(B)). The BNC reduces molecular oxygen to 2 water molecules using 4 electrons from cytochrome c in the IMS and 4 protons from the mitochondrial matrix.</text>
</comment>
<comment type="catalytic activity">
    <reaction evidence="3">
        <text>4 Fe(II)-[cytochrome c] + O2 + 8 H(+)(in) = 4 Fe(III)-[cytochrome c] + 2 H2O + 4 H(+)(out)</text>
        <dbReference type="Rhea" id="RHEA:11436"/>
        <dbReference type="Rhea" id="RHEA-COMP:10350"/>
        <dbReference type="Rhea" id="RHEA-COMP:14399"/>
        <dbReference type="ChEBI" id="CHEBI:15377"/>
        <dbReference type="ChEBI" id="CHEBI:15378"/>
        <dbReference type="ChEBI" id="CHEBI:15379"/>
        <dbReference type="ChEBI" id="CHEBI:29033"/>
        <dbReference type="ChEBI" id="CHEBI:29034"/>
        <dbReference type="EC" id="7.1.1.9"/>
    </reaction>
    <physiologicalReaction direction="left-to-right" evidence="3">
        <dbReference type="Rhea" id="RHEA:11437"/>
    </physiologicalReaction>
</comment>
<comment type="cofactor">
    <cofactor evidence="3">
        <name>heme</name>
        <dbReference type="ChEBI" id="CHEBI:30413"/>
    </cofactor>
    <text evidence="3">Binds 2 heme A groups non-covalently per subunit.</text>
</comment>
<comment type="cofactor">
    <cofactor evidence="3">
        <name>Cu cation</name>
        <dbReference type="ChEBI" id="CHEBI:23378"/>
    </cofactor>
    <text evidence="3">Binds a copper B center.</text>
</comment>
<comment type="pathway">
    <text evidence="3">Energy metabolism; oxidative phosphorylation.</text>
</comment>
<comment type="subunit">
    <text evidence="3">Component of the cytochrome c oxidase (complex IV, CIV), a multisubunit enzyme composed of a catalytic core of 3 subunits and several supernumerary subunits. The complex exists as a monomer or a dimer and forms supercomplexes (SCs) in the inner mitochondrial membrane with ubiquinol-cytochrome c oxidoreductase (cytochrome b-c1 complex, complex III, CIII).</text>
</comment>
<comment type="subcellular location">
    <subcellularLocation>
        <location evidence="3">Mitochondrion inner membrane</location>
        <topology evidence="3">Multi-pass membrane protein</topology>
    </subcellularLocation>
</comment>
<comment type="similarity">
    <text evidence="4">Belongs to the heme-copper respiratory oxidase family.</text>
</comment>
<keyword id="KW-0186">Copper</keyword>
<keyword id="KW-0249">Electron transport</keyword>
<keyword id="KW-0349">Heme</keyword>
<keyword id="KW-0408">Iron</keyword>
<keyword id="KW-0472">Membrane</keyword>
<keyword id="KW-0479">Metal-binding</keyword>
<keyword id="KW-0496">Mitochondrion</keyword>
<keyword id="KW-0999">Mitochondrion inner membrane</keyword>
<keyword id="KW-0679">Respiratory chain</keyword>
<keyword id="KW-1278">Translocase</keyword>
<keyword id="KW-0812">Transmembrane</keyword>
<keyword id="KW-1133">Transmembrane helix</keyword>
<keyword id="KW-0813">Transport</keyword>